<comment type="function">
    <text evidence="2">Catalyzes diesterification of phthiocerol, phthiodiolone, and phenolphthiocerol with mycocerosic acids, the final step in the phthiocerol, phthiodiolone and phenolphthiocerol dimycocerosate esters (PDIM) synthesis. Can directly transfer the mycocerosate bound to the mycocerosic acid synthase (mas) onto the substrate alcohols.</text>
</comment>
<comment type="catalytic activity">
    <reaction evidence="2">
        <text>2 a mycocerosyl-[mycocerosic acid synthase] + a phthiocerol = a dimycocerosyl phthiocerol + 2 holo-[mycocerosic acid synthase].</text>
        <dbReference type="EC" id="2.3.1.282"/>
    </reaction>
</comment>
<comment type="catalytic activity">
    <reaction evidence="2">
        <text>2 a mycocerosyl-[mycocerosic acid synthase] + a phthiodiolone = a dimycocerosyl phthiodiolone + 2 holo-[mycocerosic acid synthase].</text>
        <dbReference type="EC" id="2.3.1.282"/>
    </reaction>
</comment>
<comment type="catalytic activity">
    <reaction evidence="2">
        <text>2 a mycocerosyl-[mycocerosic acid synthase] + a phenolphthiocerol = a dimycocerosyl phenolphthiocerol + 2 holo-[mycocerosic acid synthase].</text>
        <dbReference type="EC" id="2.3.1.282"/>
    </reaction>
</comment>
<comment type="subunit">
    <text evidence="2">Monomer. Interacts directly with the acyl carrier protein (ACP) domain of the mycocerosic acid synthase (mas) protein.</text>
</comment>
<comment type="domain">
    <text evidence="2">Consists of two structural domains that are related to each other.</text>
</comment>
<comment type="PTM">
    <text evidence="1">Phosphorylated by PknB. Dephosphorylated by PstP (By similarity).</text>
</comment>
<comment type="similarity">
    <text evidence="3">Belongs to the acyltransferase PapA5 family.</text>
</comment>
<name>PAPA5_MYCTO</name>
<organism>
    <name type="scientific">Mycobacterium tuberculosis (strain CDC 1551 / Oshkosh)</name>
    <dbReference type="NCBI Taxonomy" id="83331"/>
    <lineage>
        <taxon>Bacteria</taxon>
        <taxon>Bacillati</taxon>
        <taxon>Actinomycetota</taxon>
        <taxon>Actinomycetes</taxon>
        <taxon>Mycobacteriales</taxon>
        <taxon>Mycobacteriaceae</taxon>
        <taxon>Mycobacterium</taxon>
        <taxon>Mycobacterium tuberculosis complex</taxon>
    </lineage>
</organism>
<accession>P9WIN4</accession>
<accession>L0TE04</accession>
<accession>P96208</accession>
<feature type="chain" id="PRO_0000427975" description="Phthiocerol/phthiodiolone dimycocerosyl transferase">
    <location>
        <begin position="1"/>
        <end position="422"/>
    </location>
</feature>
<feature type="active site" description="Proton acceptor" evidence="1">
    <location>
        <position position="124"/>
    </location>
</feature>
<feature type="site" description="Structural role in the organization of the active site" evidence="1">
    <location>
        <position position="128"/>
    </location>
</feature>
<feature type="site" description="Important for mas ACP domain recognition" evidence="1">
    <location>
        <position position="312"/>
    </location>
</feature>
<evidence type="ECO:0000250" key="1"/>
<evidence type="ECO:0000250" key="2">
    <source>
        <dbReference type="UniProtKB" id="P9WIN5"/>
    </source>
</evidence>
<evidence type="ECO:0000305" key="3"/>
<proteinExistence type="inferred from homology"/>
<dbReference type="EC" id="2.3.1.282" evidence="2"/>
<dbReference type="EMBL" id="AE000516">
    <property type="protein sequence ID" value="AAK47336.1"/>
    <property type="molecule type" value="Genomic_DNA"/>
</dbReference>
<dbReference type="PIR" id="G70984">
    <property type="entry name" value="G70984"/>
</dbReference>
<dbReference type="RefSeq" id="WP_003414853.1">
    <property type="nucleotide sequence ID" value="NZ_KK341227.1"/>
</dbReference>
<dbReference type="SMR" id="P9WIN4"/>
<dbReference type="KEGG" id="mtc:MT3009"/>
<dbReference type="PATRIC" id="fig|83331.31.peg.3250"/>
<dbReference type="HOGENOM" id="CLU_050374_1_0_11"/>
<dbReference type="Proteomes" id="UP000001020">
    <property type="component" value="Chromosome"/>
</dbReference>
<dbReference type="GO" id="GO:0016746">
    <property type="term" value="F:acyltransferase activity"/>
    <property type="evidence" value="ECO:0007669"/>
    <property type="project" value="UniProtKB-KW"/>
</dbReference>
<dbReference type="GO" id="GO:0006629">
    <property type="term" value="P:lipid metabolic process"/>
    <property type="evidence" value="ECO:0007669"/>
    <property type="project" value="UniProtKB-KW"/>
</dbReference>
<dbReference type="Gene3D" id="3.30.559.10">
    <property type="entry name" value="Chloramphenicol acetyltransferase-like domain"/>
    <property type="match status" value="1"/>
</dbReference>
<dbReference type="Gene3D" id="3.30.559.30">
    <property type="entry name" value="Nonribosomal peptide synthetase, condensation domain"/>
    <property type="match status" value="1"/>
</dbReference>
<dbReference type="InterPro" id="IPR023213">
    <property type="entry name" value="CAT-like_dom_sf"/>
</dbReference>
<dbReference type="InterPro" id="IPR031641">
    <property type="entry name" value="PapA_C"/>
</dbReference>
<dbReference type="NCBIfam" id="NF006788">
    <property type="entry name" value="PRK09294.1-2"/>
    <property type="match status" value="1"/>
</dbReference>
<dbReference type="Pfam" id="PF16911">
    <property type="entry name" value="PapA_C"/>
    <property type="match status" value="1"/>
</dbReference>
<dbReference type="SUPFAM" id="SSF52777">
    <property type="entry name" value="CoA-dependent acyltransferases"/>
    <property type="match status" value="2"/>
</dbReference>
<reference key="1">
    <citation type="journal article" date="2002" name="J. Bacteriol.">
        <title>Whole-genome comparison of Mycobacterium tuberculosis clinical and laboratory strains.</title>
        <authorList>
            <person name="Fleischmann R.D."/>
            <person name="Alland D."/>
            <person name="Eisen J.A."/>
            <person name="Carpenter L."/>
            <person name="White O."/>
            <person name="Peterson J.D."/>
            <person name="DeBoy R.T."/>
            <person name="Dodson R.J."/>
            <person name="Gwinn M.L."/>
            <person name="Haft D.H."/>
            <person name="Hickey E.K."/>
            <person name="Kolonay J.F."/>
            <person name="Nelson W.C."/>
            <person name="Umayam L.A."/>
            <person name="Ermolaeva M.D."/>
            <person name="Salzberg S.L."/>
            <person name="Delcher A."/>
            <person name="Utterback T.R."/>
            <person name="Weidman J.F."/>
            <person name="Khouri H.M."/>
            <person name="Gill J."/>
            <person name="Mikula A."/>
            <person name="Bishai W."/>
            <person name="Jacobs W.R. Jr."/>
            <person name="Venter J.C."/>
            <person name="Fraser C.M."/>
        </authorList>
    </citation>
    <scope>NUCLEOTIDE SEQUENCE [LARGE SCALE GENOMIC DNA]</scope>
    <source>
        <strain>CDC 1551 / Oshkosh</strain>
    </source>
</reference>
<keyword id="KW-0012">Acyltransferase</keyword>
<keyword id="KW-0444">Lipid biosynthesis</keyword>
<keyword id="KW-0443">Lipid metabolism</keyword>
<keyword id="KW-1185">Reference proteome</keyword>
<keyword id="KW-0808">Transferase</keyword>
<gene>
    <name type="primary">papA5</name>
    <name type="ordered locus">MT3009</name>
</gene>
<protein>
    <recommendedName>
        <fullName>Phthiocerol/phthiodiolone dimycocerosyl transferase</fullName>
        <ecNumber evidence="2">2.3.1.282</ecNumber>
    </recommendedName>
    <alternativeName>
        <fullName>Acyltransferase PapA5</fullName>
    </alternativeName>
    <alternativeName>
        <fullName>Phthiocerol/phthiodiolone O-acyltransferase</fullName>
    </alternativeName>
    <alternativeName>
        <fullName>Polyketide synthase-associated protein A5</fullName>
    </alternativeName>
</protein>
<sequence>MFPGSVIRKLSHSEEVFAQYEVFTSMTIQLRGVIDVDALSDAFDALLETHPVLASHLEQSSDGGWNLVADDLLHSGICVIDGTAATNGSPSGNAELRLDQSVSLLHLQLILREGGAELTLYLHHCMADGHHGAVLVDELFSRYTDAVTTGDPGPITPQPTPLSMEAVLAQRGIRKQGLSGAERFMSVMYAYEIPATETPAVLAHPGLPQAVPVTRLWLSKQQTSDLMAFGREHRLSLNAVVAAAILLTEWQLRNTPHVPIPYVYPVDLRFVLAPPVAPTEATNLLGAASYLAEIGPNTDIVDLASDIVATLRADLANGVIQQSGLHFGTAFEGTPPGLPPLVFCTDATSFPTMRTPPGLEIEDIKGQFYCSISVPLDLYSCAVYAGQLIIEHHGHIAEPGKSLEAIRSLLCTVPSEYGWIME</sequence>